<name>CS_HELAN</name>
<organism>
    <name type="scientific">Helianthus annuus</name>
    <name type="common">Common sunflower</name>
    <dbReference type="NCBI Taxonomy" id="4232"/>
    <lineage>
        <taxon>Eukaryota</taxon>
        <taxon>Viridiplantae</taxon>
        <taxon>Streptophyta</taxon>
        <taxon>Embryophyta</taxon>
        <taxon>Tracheophyta</taxon>
        <taxon>Spermatophyta</taxon>
        <taxon>Magnoliopsida</taxon>
        <taxon>eudicotyledons</taxon>
        <taxon>Gunneridae</taxon>
        <taxon>Pentapetalae</taxon>
        <taxon>asterids</taxon>
        <taxon>campanulids</taxon>
        <taxon>Asterales</taxon>
        <taxon>Asteraceae</taxon>
        <taxon>Asteroideae</taxon>
        <taxon>Heliantheae alliance</taxon>
        <taxon>Heliantheae</taxon>
        <taxon>Helianthus</taxon>
    </lineage>
</organism>
<protein>
    <recommendedName>
        <fullName>Alpha-copaene synthase</fullName>
        <ecNumber>4.2.3.133</ecNumber>
    </recommendedName>
    <alternativeName>
        <fullName>Alpha-humulene synthase</fullName>
        <ecNumber>4.2.3.104</ecNumber>
    </alternativeName>
    <alternativeName>
        <fullName>Alpha-muurolene synthase</fullName>
        <ecNumber>4.2.3.125</ecNumber>
    </alternativeName>
    <alternativeName>
        <fullName>Delta-cadinene synthase</fullName>
        <shortName>HaCS</shortName>
    </alternativeName>
    <alternativeName>
        <fullName>Terpene synthase 2</fullName>
        <shortName>HaTPS2</shortName>
    </alternativeName>
</protein>
<comment type="function">
    <text evidence="3 4">Involved in the biosynthesis of germacrene-derived sesquiterpene lactones (PubMed:30468448). Catalyzes the cyclization of farnesyl diphosphate to alpha-copaene, delta-cadinene, alpha-muurolene, beta-caryophyllene and alpha-humulene (PubMed:19580670).</text>
</comment>
<comment type="catalytic activity">
    <reaction evidence="3">
        <text>(2E,6E)-farnesyl diphosphate = alpha-copaene + diphosphate</text>
        <dbReference type="Rhea" id="RHEA:33991"/>
        <dbReference type="ChEBI" id="CHEBI:10221"/>
        <dbReference type="ChEBI" id="CHEBI:33019"/>
        <dbReference type="ChEBI" id="CHEBI:175763"/>
        <dbReference type="EC" id="4.2.3.133"/>
    </reaction>
    <physiologicalReaction direction="left-to-right" evidence="3">
        <dbReference type="Rhea" id="RHEA:33992"/>
    </physiologicalReaction>
</comment>
<comment type="catalytic activity">
    <reaction evidence="3">
        <text>(2E,6E)-farnesyl diphosphate = alpha-muurolene + diphosphate</text>
        <dbReference type="Rhea" id="RHEA:33103"/>
        <dbReference type="ChEBI" id="CHEBI:33019"/>
        <dbReference type="ChEBI" id="CHEBI:64797"/>
        <dbReference type="ChEBI" id="CHEBI:175763"/>
        <dbReference type="EC" id="4.2.3.125"/>
    </reaction>
    <physiologicalReaction direction="left-to-right" evidence="3">
        <dbReference type="Rhea" id="RHEA:33104"/>
    </physiologicalReaction>
</comment>
<comment type="catalytic activity">
    <reaction evidence="3">
        <text>(2E,6E)-farnesyl diphosphate = alpha-humulene + diphosphate</text>
        <dbReference type="Rhea" id="RHEA:31895"/>
        <dbReference type="ChEBI" id="CHEBI:5768"/>
        <dbReference type="ChEBI" id="CHEBI:33019"/>
        <dbReference type="ChEBI" id="CHEBI:175763"/>
        <dbReference type="EC" id="4.2.3.104"/>
    </reaction>
    <physiologicalReaction direction="left-to-right" evidence="3">
        <dbReference type="Rhea" id="RHEA:31896"/>
    </physiologicalReaction>
</comment>
<comment type="cofactor">
    <cofactor evidence="1">
        <name>Mg(2+)</name>
        <dbReference type="ChEBI" id="CHEBI:18420"/>
    </cofactor>
    <text evidence="1">Binds 3 Mg(2+) ions per subunit.</text>
</comment>
<comment type="pathway">
    <text evidence="4">Secondary metabolite biosynthesis; terpenoid biosynthesis.</text>
</comment>
<comment type="tissue specificity">
    <text evidence="3">Mainly expressed in sunflower trichomes.</text>
</comment>
<comment type="domain">
    <text evidence="1">The Asp-Asp-Xaa-Xaa-Asp/Glu (DDXXD/E) motif is important for the catalytic activity, presumably through binding to Mg(2+).</text>
</comment>
<comment type="similarity">
    <text evidence="5">Belongs to the terpene synthase family.</text>
</comment>
<keyword id="KW-0456">Lyase</keyword>
<keyword id="KW-0460">Magnesium</keyword>
<keyword id="KW-0479">Metal-binding</keyword>
<proteinExistence type="evidence at protein level"/>
<gene>
    <name type="primary">CS</name>
</gene>
<accession>Q4U3F6</accession>
<dbReference type="EC" id="4.2.3.133"/>
<dbReference type="EC" id="4.2.3.104"/>
<dbReference type="EC" id="4.2.3.125"/>
<dbReference type="EMBL" id="DQ016668">
    <property type="protein sequence ID" value="AAY41422.2"/>
    <property type="molecule type" value="mRNA"/>
</dbReference>
<dbReference type="EMBL" id="EU443250">
    <property type="protein sequence ID" value="ACA33926.1"/>
    <property type="molecule type" value="Genomic_DNA"/>
</dbReference>
<dbReference type="SMR" id="Q4U3F6"/>
<dbReference type="KEGG" id="ag:AAY41422"/>
<dbReference type="OMA" id="YSRGRIH"/>
<dbReference type="OrthoDB" id="1877784at2759"/>
<dbReference type="PhylomeDB" id="Q4U3F6"/>
<dbReference type="BRENDA" id="4.2.3.13">
    <property type="organism ID" value="2597"/>
</dbReference>
<dbReference type="BRENDA" id="4.2.3.133">
    <property type="organism ID" value="2597"/>
</dbReference>
<dbReference type="UniPathway" id="UPA00213"/>
<dbReference type="GO" id="GO:0047461">
    <property type="term" value="F:(+)-delta-cadinene synthase activity"/>
    <property type="evidence" value="ECO:0000314"/>
    <property type="project" value="UniProtKB"/>
</dbReference>
<dbReference type="GO" id="GO:0102877">
    <property type="term" value="F:alpha-copaene synthase activity"/>
    <property type="evidence" value="ECO:0000314"/>
    <property type="project" value="UniProtKB"/>
</dbReference>
<dbReference type="GO" id="GO:0080017">
    <property type="term" value="F:alpha-humulene synthase activity"/>
    <property type="evidence" value="ECO:0000314"/>
    <property type="project" value="UniProtKB"/>
</dbReference>
<dbReference type="GO" id="GO:0000287">
    <property type="term" value="F:magnesium ion binding"/>
    <property type="evidence" value="ECO:0007669"/>
    <property type="project" value="InterPro"/>
</dbReference>
<dbReference type="GO" id="GO:0016102">
    <property type="term" value="P:diterpenoid biosynthetic process"/>
    <property type="evidence" value="ECO:0007669"/>
    <property type="project" value="InterPro"/>
</dbReference>
<dbReference type="GO" id="GO:0051762">
    <property type="term" value="P:sesquiterpene biosynthetic process"/>
    <property type="evidence" value="ECO:0000314"/>
    <property type="project" value="UniProtKB"/>
</dbReference>
<dbReference type="CDD" id="cd00684">
    <property type="entry name" value="Terpene_cyclase_plant_C1"/>
    <property type="match status" value="1"/>
</dbReference>
<dbReference type="FunFam" id="1.10.600.10:FF:000007">
    <property type="entry name" value="Isoprene synthase, chloroplastic"/>
    <property type="match status" value="1"/>
</dbReference>
<dbReference type="Gene3D" id="1.10.600.10">
    <property type="entry name" value="Farnesyl Diphosphate Synthase"/>
    <property type="match status" value="1"/>
</dbReference>
<dbReference type="Gene3D" id="1.50.10.130">
    <property type="entry name" value="Terpene synthase, N-terminal domain"/>
    <property type="match status" value="1"/>
</dbReference>
<dbReference type="InterPro" id="IPR008949">
    <property type="entry name" value="Isoprenoid_synthase_dom_sf"/>
</dbReference>
<dbReference type="InterPro" id="IPR034741">
    <property type="entry name" value="Terpene_cyclase-like_1_C"/>
</dbReference>
<dbReference type="InterPro" id="IPR044814">
    <property type="entry name" value="Terpene_cyclase_plant_C1"/>
</dbReference>
<dbReference type="InterPro" id="IPR001906">
    <property type="entry name" value="Terpene_synth_N"/>
</dbReference>
<dbReference type="InterPro" id="IPR036965">
    <property type="entry name" value="Terpene_synth_N_sf"/>
</dbReference>
<dbReference type="InterPro" id="IPR050148">
    <property type="entry name" value="Terpene_synthase-like"/>
</dbReference>
<dbReference type="InterPro" id="IPR005630">
    <property type="entry name" value="Terpene_synthase_metal-bd"/>
</dbReference>
<dbReference type="InterPro" id="IPR008930">
    <property type="entry name" value="Terpenoid_cyclase/PrenylTrfase"/>
</dbReference>
<dbReference type="PANTHER" id="PTHR31225:SF254">
    <property type="entry name" value="LYASE"/>
    <property type="match status" value="1"/>
</dbReference>
<dbReference type="PANTHER" id="PTHR31225">
    <property type="entry name" value="OS04G0344100 PROTEIN-RELATED"/>
    <property type="match status" value="1"/>
</dbReference>
<dbReference type="Pfam" id="PF01397">
    <property type="entry name" value="Terpene_synth"/>
    <property type="match status" value="1"/>
</dbReference>
<dbReference type="Pfam" id="PF03936">
    <property type="entry name" value="Terpene_synth_C"/>
    <property type="match status" value="1"/>
</dbReference>
<dbReference type="SFLD" id="SFLDS00005">
    <property type="entry name" value="Isoprenoid_Synthase_Type_I"/>
    <property type="match status" value="1"/>
</dbReference>
<dbReference type="SFLD" id="SFLDG01019">
    <property type="entry name" value="Terpene_Cyclase_Like_1_C_Termi"/>
    <property type="match status" value="1"/>
</dbReference>
<dbReference type="SUPFAM" id="SSF48239">
    <property type="entry name" value="Terpenoid cyclases/Protein prenyltransferases"/>
    <property type="match status" value="1"/>
</dbReference>
<dbReference type="SUPFAM" id="SSF48576">
    <property type="entry name" value="Terpenoid synthases"/>
    <property type="match status" value="1"/>
</dbReference>
<sequence length="555" mass="64263">MATTEANTMAQANSQTTIEPVRHLANFPPSIWGDQFLSFSLDNSQLEAYSKAMEQPKENVRRMILNPAIDTNEKLGLIYCVYRLGLTYNFSKDIDGQLDELFKQLNLQSYNEADLYTISIHFQVFRHFGYRFSCDVFNKFKDSSSGKFKEDMTRDVRGMISLYESAQLRIRGESILDEAGAFAESKLKTIEKTLDGTLAQQVKHVLERPFNRGHQMVEARKYLFLFEEEISRYDSLLMLAKVHFNYLQLLQKEELRSVSKWWKDLDLPAKTLYVRDRVPELYVWILAFFLEPYYSEVRIITTKIVLLVLVLDDTYDAYATIEESRLLTHAINRWEVSAMLQLPEYMKPLYEILLNEYDGFYKHGRTNVIETSKKAFQDLARSYHQESEWRHAKEVPSFEEYMKIGTTTSAHNVLSKTALIGMGNIVTREALAWYESYPKIVQLSELIGRLEDDVVSVEFERERAPTATSVDAYMKTYGVSENVAVKILKKLVENGWKDLNEACLKPTEVSLDLLAPIIGLTNMTDVAYRHNDGLTFPEKTLKEYITLLFCVPVPM</sequence>
<evidence type="ECO:0000250" key="1"/>
<evidence type="ECO:0000250" key="2">
    <source>
        <dbReference type="UniProtKB" id="Q40577"/>
    </source>
</evidence>
<evidence type="ECO:0000269" key="3">
    <source>
    </source>
</evidence>
<evidence type="ECO:0000303" key="4">
    <source>
    </source>
</evidence>
<evidence type="ECO:0000305" key="5"/>
<reference key="1">
    <citation type="journal article" date="2009" name="BMC Plant Biol.">
        <title>Identification, functional characterization and developmental regulation of sesquiterpene synthases from sunflower capitate glandular trichomes.</title>
        <authorList>
            <person name="Goepfert J.C."/>
            <person name="Macnevin G."/>
            <person name="Ro D.-K."/>
            <person name="Spring O."/>
        </authorList>
    </citation>
    <scope>NUCLEOTIDE SEQUENCE [GENOMIC DNA / MRNA]</scope>
    <scope>FUNCTION</scope>
    <scope>CATALYTIC ACTIVITY</scope>
    <scope>TISSUE SPECIFICITY</scope>
    <source>
        <tissue>Trichome gland</tissue>
    </source>
</reference>
<reference key="2">
    <citation type="journal article" date="2019" name="Nat. Prod. Rep.">
        <title>Non-volatile natural products in plant glandular trichomes: chemistry, biological activities and biosynthesis.</title>
        <authorList>
            <person name="Liu Y."/>
            <person name="Jing S.-X."/>
            <person name="Luo S.-H."/>
            <person name="Li S.-H."/>
        </authorList>
    </citation>
    <scope>PATHWAY</scope>
    <scope>REVIEW</scope>
</reference>
<feature type="chain" id="PRO_0000422212" description="Alpha-copaene synthase">
    <location>
        <begin position="1"/>
        <end position="555"/>
    </location>
</feature>
<feature type="short sequence motif" description="DDXXD motif" evidence="5">
    <location>
        <begin position="312"/>
        <end position="316"/>
    </location>
</feature>
<feature type="binding site" evidence="2">
    <location>
        <position position="312"/>
    </location>
    <ligand>
        <name>Mg(2+)</name>
        <dbReference type="ChEBI" id="CHEBI:18420"/>
        <label>1</label>
    </ligand>
</feature>
<feature type="binding site" evidence="2">
    <location>
        <position position="312"/>
    </location>
    <ligand>
        <name>Mg(2+)</name>
        <dbReference type="ChEBI" id="CHEBI:18420"/>
        <label>2</label>
    </ligand>
</feature>
<feature type="binding site" evidence="2">
    <location>
        <position position="316"/>
    </location>
    <ligand>
        <name>Mg(2+)</name>
        <dbReference type="ChEBI" id="CHEBI:18420"/>
        <label>1</label>
    </ligand>
</feature>
<feature type="binding site" evidence="2">
    <location>
        <position position="316"/>
    </location>
    <ligand>
        <name>Mg(2+)</name>
        <dbReference type="ChEBI" id="CHEBI:18420"/>
        <label>2</label>
    </ligand>
</feature>
<feature type="binding site" evidence="2">
    <location>
        <position position="452"/>
    </location>
    <ligand>
        <name>Mg(2+)</name>
        <dbReference type="ChEBI" id="CHEBI:18420"/>
        <label>3</label>
    </ligand>
</feature>
<feature type="binding site" evidence="2">
    <location>
        <position position="456"/>
    </location>
    <ligand>
        <name>Mg(2+)</name>
        <dbReference type="ChEBI" id="CHEBI:18420"/>
        <label>3</label>
    </ligand>
</feature>
<feature type="binding site" evidence="2">
    <location>
        <position position="460"/>
    </location>
    <ligand>
        <name>Mg(2+)</name>
        <dbReference type="ChEBI" id="CHEBI:18420"/>
        <label>3</label>
    </ligand>
</feature>